<comment type="function">
    <text evidence="5">Protein-lysine methyltransferase methylating chloroplastic fructose 1,6-bisphosphate aldolases. Can also use with low efficiency gamma-tocopherol methyltransferase as substrate, but not a cytosolic aldolase. Able to interact with unmethylated Rubisco, but unlike in pea, the complex is catalytically unproductive.</text>
</comment>
<comment type="catalytic activity">
    <reaction evidence="5">
        <text>[fructose-bisphosphate aldolase]-L-lysine + 3 S-adenosyl-L-methionine = [fructose-bisphosphate aldolase]-N(6),N(6),N(6)-trimethyl-L-lysine + 3 S-adenosyl-L-homocysteine + 3 H(+)</text>
        <dbReference type="Rhea" id="RHEA:51000"/>
        <dbReference type="Rhea" id="RHEA-COMP:12861"/>
        <dbReference type="Rhea" id="RHEA-COMP:12862"/>
        <dbReference type="ChEBI" id="CHEBI:15378"/>
        <dbReference type="ChEBI" id="CHEBI:29969"/>
        <dbReference type="ChEBI" id="CHEBI:57856"/>
        <dbReference type="ChEBI" id="CHEBI:59789"/>
        <dbReference type="ChEBI" id="CHEBI:61961"/>
        <dbReference type="EC" id="2.1.1.259"/>
    </reaction>
</comment>
<comment type="biophysicochemical properties">
    <kinetics>
        <KM evidence="5">13.8 uM for fructose-bisphosphate aldolase 2</KM>
        <KM evidence="5">14.8 uM for fructose-bisphosphate aldolase 3</KM>
        <KM evidence="5">31.4 uM for gamma-tocopherol methyltransferase</KM>
        <Vmax evidence="5">17.0 nmol/min/mg enzyme with fructose-bisphosphate aldolase 2 as substrate</Vmax>
        <Vmax evidence="5">16.2 nmol/min/mg enzyme with fructose-bisphosphate aldolase 3 as substrate</Vmax>
        <Vmax evidence="5">1.2 nmol/min/mg enzyme with gamma-tocopherol methyltransferase as substrate</Vmax>
    </kinetics>
</comment>
<comment type="interaction">
    <interactant intactId="EBI-15192835">
        <id>Q9XI84</id>
    </interactant>
    <interactant intactId="EBI-4448318">
        <id>P46604</id>
        <label>HAT22</label>
    </interactant>
    <organismsDiffer>false</organismsDiffer>
    <experiments>3</experiments>
</comment>
<comment type="interaction">
    <interactant intactId="EBI-15192835">
        <id>Q9XI84</id>
    </interactant>
    <interactant intactId="EBI-1554124">
        <id>Q38824</id>
        <label>IAA6</label>
    </interactant>
    <organismsDiffer>false</organismsDiffer>
    <experiments>3</experiments>
</comment>
<comment type="subcellular location">
    <subcellularLocation>
        <location evidence="5">Plastid</location>
        <location evidence="5">Chloroplast stroma</location>
    </subcellularLocation>
</comment>
<comment type="disruption phenotype">
    <text evidence="5">No visible phenotype.</text>
</comment>
<comment type="similarity">
    <text evidence="4">Belongs to the class V-like SAM-binding methyltransferase superfamily. Plant protein-lysine LSMT methyltransferase family.</text>
</comment>
<comment type="sequence caution" evidence="6">
    <conflict type="erroneous gene model prediction">
        <sequence resource="EMBL-CDS" id="AAF79410"/>
    </conflict>
</comment>
<organism>
    <name type="scientific">Arabidopsis thaliana</name>
    <name type="common">Mouse-ear cress</name>
    <dbReference type="NCBI Taxonomy" id="3702"/>
    <lineage>
        <taxon>Eukaryota</taxon>
        <taxon>Viridiplantae</taxon>
        <taxon>Streptophyta</taxon>
        <taxon>Embryophyta</taxon>
        <taxon>Tracheophyta</taxon>
        <taxon>Spermatophyta</taxon>
        <taxon>Magnoliopsida</taxon>
        <taxon>eudicotyledons</taxon>
        <taxon>Gunneridae</taxon>
        <taxon>Pentapetalae</taxon>
        <taxon>rosids</taxon>
        <taxon>malvids</taxon>
        <taxon>Brassicales</taxon>
        <taxon>Brassicaceae</taxon>
        <taxon>Camelineae</taxon>
        <taxon>Arabidopsis</taxon>
    </lineage>
</organism>
<evidence type="ECO:0000250" key="1"/>
<evidence type="ECO:0000255" key="2"/>
<evidence type="ECO:0000255" key="3">
    <source>
        <dbReference type="PROSITE-ProRule" id="PRU00190"/>
    </source>
</evidence>
<evidence type="ECO:0000255" key="4">
    <source>
        <dbReference type="PROSITE-ProRule" id="PRU00916"/>
    </source>
</evidence>
<evidence type="ECO:0000269" key="5">
    <source>
    </source>
</evidence>
<evidence type="ECO:0000305" key="6"/>
<reference key="1">
    <citation type="journal article" date="2000" name="Nature">
        <title>Sequence and analysis of chromosome 1 of the plant Arabidopsis thaliana.</title>
        <authorList>
            <person name="Theologis A."/>
            <person name="Ecker J.R."/>
            <person name="Palm C.J."/>
            <person name="Federspiel N.A."/>
            <person name="Kaul S."/>
            <person name="White O."/>
            <person name="Alonso J."/>
            <person name="Altafi H."/>
            <person name="Araujo R."/>
            <person name="Bowman C.L."/>
            <person name="Brooks S.Y."/>
            <person name="Buehler E."/>
            <person name="Chan A."/>
            <person name="Chao Q."/>
            <person name="Chen H."/>
            <person name="Cheuk R.F."/>
            <person name="Chin C.W."/>
            <person name="Chung M.K."/>
            <person name="Conn L."/>
            <person name="Conway A.B."/>
            <person name="Conway A.R."/>
            <person name="Creasy T.H."/>
            <person name="Dewar K."/>
            <person name="Dunn P."/>
            <person name="Etgu P."/>
            <person name="Feldblyum T.V."/>
            <person name="Feng J.-D."/>
            <person name="Fong B."/>
            <person name="Fujii C.Y."/>
            <person name="Gill J.E."/>
            <person name="Goldsmith A.D."/>
            <person name="Haas B."/>
            <person name="Hansen N.F."/>
            <person name="Hughes B."/>
            <person name="Huizar L."/>
            <person name="Hunter J.L."/>
            <person name="Jenkins J."/>
            <person name="Johnson-Hopson C."/>
            <person name="Khan S."/>
            <person name="Khaykin E."/>
            <person name="Kim C.J."/>
            <person name="Koo H.L."/>
            <person name="Kremenetskaia I."/>
            <person name="Kurtz D.B."/>
            <person name="Kwan A."/>
            <person name="Lam B."/>
            <person name="Langin-Hooper S."/>
            <person name="Lee A."/>
            <person name="Lee J.M."/>
            <person name="Lenz C.A."/>
            <person name="Li J.H."/>
            <person name="Li Y.-P."/>
            <person name="Lin X."/>
            <person name="Liu S.X."/>
            <person name="Liu Z.A."/>
            <person name="Luros J.S."/>
            <person name="Maiti R."/>
            <person name="Marziali A."/>
            <person name="Militscher J."/>
            <person name="Miranda M."/>
            <person name="Nguyen M."/>
            <person name="Nierman W.C."/>
            <person name="Osborne B.I."/>
            <person name="Pai G."/>
            <person name="Peterson J."/>
            <person name="Pham P.K."/>
            <person name="Rizzo M."/>
            <person name="Rooney T."/>
            <person name="Rowley D."/>
            <person name="Sakano H."/>
            <person name="Salzberg S.L."/>
            <person name="Schwartz J.R."/>
            <person name="Shinn P."/>
            <person name="Southwick A.M."/>
            <person name="Sun H."/>
            <person name="Tallon L.J."/>
            <person name="Tambunga G."/>
            <person name="Toriumi M.J."/>
            <person name="Town C.D."/>
            <person name="Utterback T."/>
            <person name="Van Aken S."/>
            <person name="Vaysberg M."/>
            <person name="Vysotskaia V.S."/>
            <person name="Walker M."/>
            <person name="Wu D."/>
            <person name="Yu G."/>
            <person name="Fraser C.M."/>
            <person name="Venter J.C."/>
            <person name="Davis R.W."/>
        </authorList>
    </citation>
    <scope>NUCLEOTIDE SEQUENCE [LARGE SCALE GENOMIC DNA]</scope>
    <source>
        <strain>cv. Columbia</strain>
    </source>
</reference>
<reference key="2">
    <citation type="journal article" date="2017" name="Plant J.">
        <title>Araport11: a complete reannotation of the Arabidopsis thaliana reference genome.</title>
        <authorList>
            <person name="Cheng C.Y."/>
            <person name="Krishnakumar V."/>
            <person name="Chan A.P."/>
            <person name="Thibaud-Nissen F."/>
            <person name="Schobel S."/>
            <person name="Town C.D."/>
        </authorList>
    </citation>
    <scope>GENOME REANNOTATION</scope>
    <source>
        <strain>cv. Columbia</strain>
    </source>
</reference>
<reference key="3">
    <citation type="journal article" date="2003" name="Science">
        <title>Empirical analysis of transcriptional activity in the Arabidopsis genome.</title>
        <authorList>
            <person name="Yamada K."/>
            <person name="Lim J."/>
            <person name="Dale J.M."/>
            <person name="Chen H."/>
            <person name="Shinn P."/>
            <person name="Palm C.J."/>
            <person name="Southwick A.M."/>
            <person name="Wu H.C."/>
            <person name="Kim C.J."/>
            <person name="Nguyen M."/>
            <person name="Pham P.K."/>
            <person name="Cheuk R.F."/>
            <person name="Karlin-Newmann G."/>
            <person name="Liu S.X."/>
            <person name="Lam B."/>
            <person name="Sakano H."/>
            <person name="Wu T."/>
            <person name="Yu G."/>
            <person name="Miranda M."/>
            <person name="Quach H.L."/>
            <person name="Tripp M."/>
            <person name="Chang C.H."/>
            <person name="Lee J.M."/>
            <person name="Toriumi M.J."/>
            <person name="Chan M.M."/>
            <person name="Tang C.C."/>
            <person name="Onodera C.S."/>
            <person name="Deng J.M."/>
            <person name="Akiyama K."/>
            <person name="Ansari Y."/>
            <person name="Arakawa T."/>
            <person name="Banh J."/>
            <person name="Banno F."/>
            <person name="Bowser L."/>
            <person name="Brooks S.Y."/>
            <person name="Carninci P."/>
            <person name="Chao Q."/>
            <person name="Choy N."/>
            <person name="Enju A."/>
            <person name="Goldsmith A.D."/>
            <person name="Gurjal M."/>
            <person name="Hansen N.F."/>
            <person name="Hayashizaki Y."/>
            <person name="Johnson-Hopson C."/>
            <person name="Hsuan V.W."/>
            <person name="Iida K."/>
            <person name="Karnes M."/>
            <person name="Khan S."/>
            <person name="Koesema E."/>
            <person name="Ishida J."/>
            <person name="Jiang P.X."/>
            <person name="Jones T."/>
            <person name="Kawai J."/>
            <person name="Kamiya A."/>
            <person name="Meyers C."/>
            <person name="Nakajima M."/>
            <person name="Narusaka M."/>
            <person name="Seki M."/>
            <person name="Sakurai T."/>
            <person name="Satou M."/>
            <person name="Tamse R."/>
            <person name="Vaysberg M."/>
            <person name="Wallender E.K."/>
            <person name="Wong C."/>
            <person name="Yamamura Y."/>
            <person name="Yuan S."/>
            <person name="Shinozaki K."/>
            <person name="Davis R.W."/>
            <person name="Theologis A."/>
            <person name="Ecker J.R."/>
        </authorList>
    </citation>
    <scope>NUCLEOTIDE SEQUENCE [LARGE SCALE MRNA]</scope>
    <source>
        <strain>cv. Columbia</strain>
    </source>
</reference>
<reference key="4">
    <citation type="journal article" date="2012" name="J. Biol. Chem.">
        <title>Characterization of chloroplastic fructose 1,6-bisphosphate aldolases as lysine-methylated proteins in plants.</title>
        <authorList>
            <person name="Mininno M."/>
            <person name="Brugiere S."/>
            <person name="Pautre V."/>
            <person name="Gilgen A."/>
            <person name="Ma S."/>
            <person name="Ferro M."/>
            <person name="Tardif M."/>
            <person name="Alban C."/>
            <person name="Ravanel S."/>
        </authorList>
    </citation>
    <scope>FUNCTION</scope>
    <scope>CATALYTIC ACTIVITY</scope>
    <scope>SUBCELLULAR LOCATION</scope>
    <scope>DISRUPTION PHENOTYPE</scope>
    <scope>BIOPHYSICOCHEMICAL PROPERTIES</scope>
    <source>
        <strain>cv. Columbia</strain>
    </source>
</reference>
<name>RBCMT_ARATH</name>
<keyword id="KW-0150">Chloroplast</keyword>
<keyword id="KW-0489">Methyltransferase</keyword>
<keyword id="KW-0934">Plastid</keyword>
<keyword id="KW-1185">Reference proteome</keyword>
<keyword id="KW-0949">S-adenosyl-L-methionine</keyword>
<keyword id="KW-0808">Transferase</keyword>
<keyword id="KW-0809">Transit peptide</keyword>
<protein>
    <recommendedName>
        <fullName>[Fructose-bisphosphate aldolase]-lysine N-methyltransferase, chloroplastic</fullName>
        <ecNumber>2.1.1.259</ecNumber>
    </recommendedName>
    <alternativeName>
        <fullName>Aldolases N-methyltransferase</fullName>
    </alternativeName>
    <alternativeName>
        <fullName>[Ribulose-bisphosphate carboxylase]-lysine N-methyltransferase-like</fullName>
        <shortName>AtLSMT-L</shortName>
        <shortName>LSMT-like enzyme</shortName>
    </alternativeName>
</protein>
<feature type="transit peptide" description="Chloroplast" evidence="2">
    <location>
        <begin position="1"/>
        <end position="57"/>
    </location>
</feature>
<feature type="chain" id="PRO_0000022198" description="[Fructose-bisphosphate aldolase]-lysine N-methyltransferase, chloroplastic">
    <location>
        <begin position="58"/>
        <end position="482"/>
    </location>
</feature>
<feature type="domain" description="SET" evidence="3">
    <location>
        <begin position="59"/>
        <end position="282"/>
    </location>
</feature>
<feature type="binding site" evidence="1">
    <location>
        <begin position="75"/>
        <end position="77"/>
    </location>
    <ligand>
        <name>S-adenosyl-L-methionine</name>
        <dbReference type="ChEBI" id="CHEBI:59789"/>
    </ligand>
</feature>
<feature type="binding site" evidence="3">
    <location>
        <position position="217"/>
    </location>
    <ligand>
        <name>S-adenosyl-L-methionine</name>
        <dbReference type="ChEBI" id="CHEBI:59789"/>
    </ligand>
</feature>
<feature type="binding site" evidence="1">
    <location>
        <position position="217"/>
    </location>
    <ligand>
        <name>substrate</name>
    </ligand>
</feature>
<feature type="binding site" evidence="1">
    <location>
        <position position="221"/>
    </location>
    <ligand>
        <name>substrate</name>
    </ligand>
</feature>
<feature type="binding site" evidence="1">
    <location>
        <position position="234"/>
    </location>
    <ligand>
        <name>substrate</name>
    </ligand>
</feature>
<feature type="binding site" evidence="1">
    <location>
        <begin position="237"/>
        <end position="238"/>
    </location>
    <ligand>
        <name>S-adenosyl-L-methionine</name>
        <dbReference type="ChEBI" id="CHEBI:59789"/>
    </ligand>
</feature>
<feature type="binding site" evidence="1">
    <location>
        <position position="249"/>
    </location>
    <ligand>
        <name>substrate</name>
    </ligand>
</feature>
<feature type="binding site" evidence="1">
    <location>
        <position position="281"/>
    </location>
    <ligand>
        <name>substrate</name>
    </ligand>
</feature>
<feature type="binding site" evidence="1">
    <location>
        <position position="294"/>
    </location>
    <ligand>
        <name>substrate</name>
    </ligand>
</feature>
<proteinExistence type="evidence at protein level"/>
<gene>
    <name type="primary">LSMT-L</name>
    <name type="synonym">RBCMT</name>
    <name type="ordered locus">At1g14030</name>
    <name type="ORF">F16A14.25</name>
    <name type="ORF">F7A19.12</name>
</gene>
<accession>Q9XI84</accession>
<accession>Q9LMF5</accession>
<dbReference type="EC" id="2.1.1.259"/>
<dbReference type="EMBL" id="AC007576">
    <property type="protein sequence ID" value="AAD39289.1"/>
    <property type="molecule type" value="Genomic_DNA"/>
</dbReference>
<dbReference type="EMBL" id="AC068197">
    <property type="protein sequence ID" value="AAF79410.1"/>
    <property type="status" value="ALT_SEQ"/>
    <property type="molecule type" value="Genomic_DNA"/>
</dbReference>
<dbReference type="EMBL" id="CP002684">
    <property type="protein sequence ID" value="AEE29100.1"/>
    <property type="molecule type" value="Genomic_DNA"/>
</dbReference>
<dbReference type="EMBL" id="BT005791">
    <property type="protein sequence ID" value="AAO64193.1"/>
    <property type="molecule type" value="mRNA"/>
</dbReference>
<dbReference type="PIR" id="F86273">
    <property type="entry name" value="F86273"/>
</dbReference>
<dbReference type="RefSeq" id="NP_172856.1">
    <property type="nucleotide sequence ID" value="NM_101269.2"/>
</dbReference>
<dbReference type="SMR" id="Q9XI84"/>
<dbReference type="BioGRID" id="23204">
    <property type="interactions" value="59"/>
</dbReference>
<dbReference type="FunCoup" id="Q9XI84">
    <property type="interactions" value="2762"/>
</dbReference>
<dbReference type="IntAct" id="Q9XI84">
    <property type="interactions" value="58"/>
</dbReference>
<dbReference type="STRING" id="3702.Q9XI84"/>
<dbReference type="PaxDb" id="3702-AT1G14030.1"/>
<dbReference type="ProteomicsDB" id="225906"/>
<dbReference type="EnsemblPlants" id="AT1G14030.1">
    <property type="protein sequence ID" value="AT1G14030.1"/>
    <property type="gene ID" value="AT1G14030"/>
</dbReference>
<dbReference type="GeneID" id="837964"/>
<dbReference type="Gramene" id="AT1G14030.1">
    <property type="protein sequence ID" value="AT1G14030.1"/>
    <property type="gene ID" value="AT1G14030"/>
</dbReference>
<dbReference type="KEGG" id="ath:AT1G14030"/>
<dbReference type="Araport" id="AT1G14030"/>
<dbReference type="TAIR" id="AT1G14030">
    <property type="gene designation" value="LSMT-L"/>
</dbReference>
<dbReference type="eggNOG" id="KOG1337">
    <property type="taxonomic scope" value="Eukaryota"/>
</dbReference>
<dbReference type="HOGENOM" id="CLU_028149_1_0_1"/>
<dbReference type="InParanoid" id="Q9XI84"/>
<dbReference type="OMA" id="QHIDGIF"/>
<dbReference type="PhylomeDB" id="Q9XI84"/>
<dbReference type="BRENDA" id="2.1.1.259">
    <property type="organism ID" value="399"/>
</dbReference>
<dbReference type="PRO" id="PR:Q9XI84"/>
<dbReference type="Proteomes" id="UP000006548">
    <property type="component" value="Chromosome 1"/>
</dbReference>
<dbReference type="ExpressionAtlas" id="Q9XI84">
    <property type="expression patterns" value="baseline and differential"/>
</dbReference>
<dbReference type="GO" id="GO:0009507">
    <property type="term" value="C:chloroplast"/>
    <property type="evidence" value="ECO:0007005"/>
    <property type="project" value="TAIR"/>
</dbReference>
<dbReference type="GO" id="GO:0009570">
    <property type="term" value="C:chloroplast stroma"/>
    <property type="evidence" value="ECO:0000314"/>
    <property type="project" value="TAIR"/>
</dbReference>
<dbReference type="GO" id="GO:0030785">
    <property type="term" value="F:[ribulose-bisphosphate carboxylase]-lysine N-methyltransferase activity"/>
    <property type="evidence" value="ECO:0007669"/>
    <property type="project" value="InterPro"/>
</dbReference>
<dbReference type="GO" id="GO:0016279">
    <property type="term" value="F:protein-lysine N-methyltransferase activity"/>
    <property type="evidence" value="ECO:0000314"/>
    <property type="project" value="TAIR"/>
</dbReference>
<dbReference type="GO" id="GO:0018023">
    <property type="term" value="P:peptidyl-lysine trimethylation"/>
    <property type="evidence" value="ECO:0000314"/>
    <property type="project" value="TAIR"/>
</dbReference>
<dbReference type="CDD" id="cd19179">
    <property type="entry name" value="SET_RBCMT"/>
    <property type="match status" value="1"/>
</dbReference>
<dbReference type="FunFam" id="3.90.1410.10:FF:000005">
    <property type="entry name" value="Ribulose-1,5 bisphosphate carboxylase/oxygenase large subunit N-methyltransferase, chloroplastic"/>
    <property type="match status" value="1"/>
</dbReference>
<dbReference type="FunFam" id="3.90.1420.10:FF:000004">
    <property type="entry name" value="Ribulose-1,5 bisphosphate carboxylase/oxygenase large subunit N-methyltransferase, chloroplastic"/>
    <property type="match status" value="1"/>
</dbReference>
<dbReference type="Gene3D" id="3.90.1420.10">
    <property type="entry name" value="Rubisco LSMT, substrate-binding domain"/>
    <property type="match status" value="1"/>
</dbReference>
<dbReference type="Gene3D" id="3.90.1410.10">
    <property type="entry name" value="set domain protein methyltransferase, domain 1"/>
    <property type="match status" value="1"/>
</dbReference>
<dbReference type="InterPro" id="IPR011192">
    <property type="entry name" value="Rubisco_LSMT_MeTrfase_plant"/>
</dbReference>
<dbReference type="InterPro" id="IPR015353">
    <property type="entry name" value="Rubisco_LSMT_subst-bd"/>
</dbReference>
<dbReference type="InterPro" id="IPR036464">
    <property type="entry name" value="Rubisco_LSMT_subst-bd_sf"/>
</dbReference>
<dbReference type="InterPro" id="IPR001214">
    <property type="entry name" value="SET_dom"/>
</dbReference>
<dbReference type="InterPro" id="IPR046341">
    <property type="entry name" value="SET_dom_sf"/>
</dbReference>
<dbReference type="InterPro" id="IPR044431">
    <property type="entry name" value="SET_RBCMT"/>
</dbReference>
<dbReference type="InterPro" id="IPR050600">
    <property type="entry name" value="SETD3_SETD6_MTase"/>
</dbReference>
<dbReference type="PANTHER" id="PTHR13271:SF113">
    <property type="entry name" value="[FRUCTOSE-BISPHOSPHATE ALDOLASE]-LYSINE N-METHYLTRANSFERASE, CHLOROPLASTIC"/>
    <property type="match status" value="1"/>
</dbReference>
<dbReference type="PANTHER" id="PTHR13271">
    <property type="entry name" value="UNCHARACTERIZED PUTATIVE METHYLTRANSFERASE"/>
    <property type="match status" value="1"/>
</dbReference>
<dbReference type="Pfam" id="PF09273">
    <property type="entry name" value="Rubis-subs-bind"/>
    <property type="match status" value="1"/>
</dbReference>
<dbReference type="PIRSF" id="PIRSF009328">
    <property type="entry name" value="RMT_SET"/>
    <property type="match status" value="1"/>
</dbReference>
<dbReference type="SUPFAM" id="SSF81822">
    <property type="entry name" value="RuBisCo LSMT C-terminal, substrate-binding domain"/>
    <property type="match status" value="1"/>
</dbReference>
<dbReference type="SUPFAM" id="SSF82199">
    <property type="entry name" value="SET domain"/>
    <property type="match status" value="1"/>
</dbReference>
<dbReference type="PROSITE" id="PS51583">
    <property type="entry name" value="SAM_MT127"/>
    <property type="match status" value="1"/>
</dbReference>
<dbReference type="PROSITE" id="PS50280">
    <property type="entry name" value="SET"/>
    <property type="match status" value="1"/>
</dbReference>
<sequence length="482" mass="54612">MSASVAVVSGFLRIPSIQKSQNPSFLFSRPKKSLVRPISASSSELPENVRNFWKWLRDQGVVSGKSVAEPAVVPEGLGLVARRDIGRNEVVLEIPKRLWINPETVTASKIGPLCGGLKPWVSVALFLIREKYEEESSWRVYLDMLPQSTDSTVFWSEEELAELKGTQLLSTTLGVKEYVENEFLKLEQEILLPNKDLFSSRITLDDFIWAFGILKSRAFSRLRGQNLVLIPLADLINHNPAIKTEDYAYEIKGAGLFSRDLLFSLKSPVYVKAGEQVYIQYDLNKSNAELALDYGFVESNPKRNSYTLTIEIPESDPFFGDKLDIAESNKMGETGYFDIVDGQTLPAGMLQYLRLVALGGPDAFLLESIFNNTIWGHLELPVSRTNEELICRVVRDACKSALSGFDTTIEEDEKLLDKGKLEPRLEMALKIRIGEKRVLQQIDQIFKDRELELDILEYYQERRLKDLGLVGEQGDIIFWETK</sequence>